<name>THII_ANOFW</name>
<sequence length="397" mass="44955">MTYDHIVIRYGEMSTKGKNRLRFVRCLKRNIAKKLKHFPNLQIEASRDRMYIRLHDTPPHPVIEKLQEVFGIQSLSLALKTESDLQKIKEATLFFVKQFPYEGKTFKISARRADKQFPITTNELNYELGSYVLKNTTGLTVDVHHPDIDVRVEVRKEGTYITAYDVPGAGGLPVGTSGKAMLMLSGGIDSPVAGYLAMKRGLQIEAVHFFSPPFTSERAKQKVIDLAQRLTEFGGTIRLHIVPFTELQQAIYKQVPENYSLIAMRRAMLRITDEIRKKENGLAIVTGESLGQVASQTLESMVVVNDVTTTPILRPLVSMDKTEIIAIAERIGTHHISIRPYEDCCTIFTPKAPKTKPKKEKIIQYEKFLPLDEMIAQTVARVETITLKPNEPLDELF</sequence>
<feature type="chain" id="PRO_1000116394" description="Probable tRNA sulfurtransferase">
    <location>
        <begin position="1"/>
        <end position="397"/>
    </location>
</feature>
<feature type="domain" description="THUMP" evidence="1">
    <location>
        <begin position="60"/>
        <end position="165"/>
    </location>
</feature>
<feature type="binding site" evidence="1">
    <location>
        <begin position="183"/>
        <end position="184"/>
    </location>
    <ligand>
        <name>ATP</name>
        <dbReference type="ChEBI" id="CHEBI:30616"/>
    </ligand>
</feature>
<feature type="binding site" evidence="1">
    <location>
        <begin position="208"/>
        <end position="209"/>
    </location>
    <ligand>
        <name>ATP</name>
        <dbReference type="ChEBI" id="CHEBI:30616"/>
    </ligand>
</feature>
<feature type="binding site" evidence="1">
    <location>
        <position position="265"/>
    </location>
    <ligand>
        <name>ATP</name>
        <dbReference type="ChEBI" id="CHEBI:30616"/>
    </ligand>
</feature>
<feature type="binding site" evidence="1">
    <location>
        <position position="287"/>
    </location>
    <ligand>
        <name>ATP</name>
        <dbReference type="ChEBI" id="CHEBI:30616"/>
    </ligand>
</feature>
<feature type="binding site" evidence="1">
    <location>
        <position position="296"/>
    </location>
    <ligand>
        <name>ATP</name>
        <dbReference type="ChEBI" id="CHEBI:30616"/>
    </ligand>
</feature>
<proteinExistence type="inferred from homology"/>
<dbReference type="EC" id="2.8.1.4" evidence="1"/>
<dbReference type="EMBL" id="CP000922">
    <property type="protein sequence ID" value="ACJ32856.1"/>
    <property type="molecule type" value="Genomic_DNA"/>
</dbReference>
<dbReference type="RefSeq" id="WP_012574179.1">
    <property type="nucleotide sequence ID" value="NC_011567.1"/>
</dbReference>
<dbReference type="SMR" id="B7GGQ4"/>
<dbReference type="STRING" id="491915.Aflv_0472"/>
<dbReference type="GeneID" id="7036729"/>
<dbReference type="KEGG" id="afl:Aflv_0472"/>
<dbReference type="PATRIC" id="fig|491915.6.peg.483"/>
<dbReference type="eggNOG" id="COG0301">
    <property type="taxonomic scope" value="Bacteria"/>
</dbReference>
<dbReference type="HOGENOM" id="CLU_037952_4_0_9"/>
<dbReference type="UniPathway" id="UPA00060"/>
<dbReference type="Proteomes" id="UP000000742">
    <property type="component" value="Chromosome"/>
</dbReference>
<dbReference type="GO" id="GO:0005829">
    <property type="term" value="C:cytosol"/>
    <property type="evidence" value="ECO:0007669"/>
    <property type="project" value="TreeGrafter"/>
</dbReference>
<dbReference type="GO" id="GO:0005524">
    <property type="term" value="F:ATP binding"/>
    <property type="evidence" value="ECO:0007669"/>
    <property type="project" value="UniProtKB-UniRule"/>
</dbReference>
<dbReference type="GO" id="GO:0004810">
    <property type="term" value="F:CCA tRNA nucleotidyltransferase activity"/>
    <property type="evidence" value="ECO:0007669"/>
    <property type="project" value="InterPro"/>
</dbReference>
<dbReference type="GO" id="GO:0000049">
    <property type="term" value="F:tRNA binding"/>
    <property type="evidence" value="ECO:0007669"/>
    <property type="project" value="UniProtKB-UniRule"/>
</dbReference>
<dbReference type="GO" id="GO:0140741">
    <property type="term" value="F:tRNA-uracil-4 sulfurtransferase activity"/>
    <property type="evidence" value="ECO:0007669"/>
    <property type="project" value="UniProtKB-EC"/>
</dbReference>
<dbReference type="GO" id="GO:0009228">
    <property type="term" value="P:thiamine biosynthetic process"/>
    <property type="evidence" value="ECO:0007669"/>
    <property type="project" value="UniProtKB-KW"/>
</dbReference>
<dbReference type="GO" id="GO:0009229">
    <property type="term" value="P:thiamine diphosphate biosynthetic process"/>
    <property type="evidence" value="ECO:0007669"/>
    <property type="project" value="UniProtKB-UniRule"/>
</dbReference>
<dbReference type="GO" id="GO:0052837">
    <property type="term" value="P:thiazole biosynthetic process"/>
    <property type="evidence" value="ECO:0007669"/>
    <property type="project" value="TreeGrafter"/>
</dbReference>
<dbReference type="GO" id="GO:0002937">
    <property type="term" value="P:tRNA 4-thiouridine biosynthesis"/>
    <property type="evidence" value="ECO:0007669"/>
    <property type="project" value="TreeGrafter"/>
</dbReference>
<dbReference type="CDD" id="cd01712">
    <property type="entry name" value="PPase_ThiI"/>
    <property type="match status" value="1"/>
</dbReference>
<dbReference type="CDD" id="cd11716">
    <property type="entry name" value="THUMP_ThiI"/>
    <property type="match status" value="1"/>
</dbReference>
<dbReference type="FunFam" id="3.40.50.620:FF:000053">
    <property type="entry name" value="Probable tRNA sulfurtransferase"/>
    <property type="match status" value="1"/>
</dbReference>
<dbReference type="Gene3D" id="3.30.2130.30">
    <property type="match status" value="1"/>
</dbReference>
<dbReference type="Gene3D" id="3.40.50.620">
    <property type="entry name" value="HUPs"/>
    <property type="match status" value="1"/>
</dbReference>
<dbReference type="HAMAP" id="MF_00021">
    <property type="entry name" value="ThiI"/>
    <property type="match status" value="1"/>
</dbReference>
<dbReference type="InterPro" id="IPR014729">
    <property type="entry name" value="Rossmann-like_a/b/a_fold"/>
</dbReference>
<dbReference type="InterPro" id="IPR020536">
    <property type="entry name" value="ThiI_AANH"/>
</dbReference>
<dbReference type="InterPro" id="IPR054173">
    <property type="entry name" value="ThiI_fer"/>
</dbReference>
<dbReference type="InterPro" id="IPR049961">
    <property type="entry name" value="ThiI_N"/>
</dbReference>
<dbReference type="InterPro" id="IPR004114">
    <property type="entry name" value="THUMP_dom"/>
</dbReference>
<dbReference type="InterPro" id="IPR049962">
    <property type="entry name" value="THUMP_ThiI"/>
</dbReference>
<dbReference type="InterPro" id="IPR003720">
    <property type="entry name" value="tRNA_STrfase"/>
</dbReference>
<dbReference type="InterPro" id="IPR050102">
    <property type="entry name" value="tRNA_sulfurtransferase_ThiI"/>
</dbReference>
<dbReference type="NCBIfam" id="TIGR00342">
    <property type="entry name" value="tRNA uracil 4-sulfurtransferase ThiI"/>
    <property type="match status" value="1"/>
</dbReference>
<dbReference type="PANTHER" id="PTHR43209">
    <property type="entry name" value="TRNA SULFURTRANSFERASE"/>
    <property type="match status" value="1"/>
</dbReference>
<dbReference type="PANTHER" id="PTHR43209:SF1">
    <property type="entry name" value="TRNA SULFURTRANSFERASE"/>
    <property type="match status" value="1"/>
</dbReference>
<dbReference type="Pfam" id="PF02568">
    <property type="entry name" value="ThiI"/>
    <property type="match status" value="1"/>
</dbReference>
<dbReference type="Pfam" id="PF22025">
    <property type="entry name" value="ThiI_fer"/>
    <property type="match status" value="1"/>
</dbReference>
<dbReference type="Pfam" id="PF02926">
    <property type="entry name" value="THUMP"/>
    <property type="match status" value="1"/>
</dbReference>
<dbReference type="SMART" id="SM00981">
    <property type="entry name" value="THUMP"/>
    <property type="match status" value="1"/>
</dbReference>
<dbReference type="SUPFAM" id="SSF52402">
    <property type="entry name" value="Adenine nucleotide alpha hydrolases-like"/>
    <property type="match status" value="1"/>
</dbReference>
<dbReference type="SUPFAM" id="SSF143437">
    <property type="entry name" value="THUMP domain-like"/>
    <property type="match status" value="1"/>
</dbReference>
<dbReference type="PROSITE" id="PS51165">
    <property type="entry name" value="THUMP"/>
    <property type="match status" value="1"/>
</dbReference>
<accession>B7GGQ4</accession>
<evidence type="ECO:0000255" key="1">
    <source>
        <dbReference type="HAMAP-Rule" id="MF_00021"/>
    </source>
</evidence>
<comment type="function">
    <text evidence="1">Catalyzes the ATP-dependent transfer of a sulfur to tRNA to produce 4-thiouridine in position 8 of tRNAs, which functions as a near-UV photosensor. Also catalyzes the transfer of sulfur to the sulfur carrier protein ThiS, forming ThiS-thiocarboxylate. This is a step in the synthesis of thiazole, in the thiamine biosynthesis pathway. The sulfur is donated as persulfide by IscS.</text>
</comment>
<comment type="catalytic activity">
    <reaction evidence="1">
        <text>[ThiI sulfur-carrier protein]-S-sulfanyl-L-cysteine + a uridine in tRNA + 2 reduced [2Fe-2S]-[ferredoxin] + ATP + H(+) = [ThiI sulfur-carrier protein]-L-cysteine + a 4-thiouridine in tRNA + 2 oxidized [2Fe-2S]-[ferredoxin] + AMP + diphosphate</text>
        <dbReference type="Rhea" id="RHEA:24176"/>
        <dbReference type="Rhea" id="RHEA-COMP:10000"/>
        <dbReference type="Rhea" id="RHEA-COMP:10001"/>
        <dbReference type="Rhea" id="RHEA-COMP:13337"/>
        <dbReference type="Rhea" id="RHEA-COMP:13338"/>
        <dbReference type="Rhea" id="RHEA-COMP:13339"/>
        <dbReference type="Rhea" id="RHEA-COMP:13340"/>
        <dbReference type="ChEBI" id="CHEBI:15378"/>
        <dbReference type="ChEBI" id="CHEBI:29950"/>
        <dbReference type="ChEBI" id="CHEBI:30616"/>
        <dbReference type="ChEBI" id="CHEBI:33019"/>
        <dbReference type="ChEBI" id="CHEBI:33737"/>
        <dbReference type="ChEBI" id="CHEBI:33738"/>
        <dbReference type="ChEBI" id="CHEBI:61963"/>
        <dbReference type="ChEBI" id="CHEBI:65315"/>
        <dbReference type="ChEBI" id="CHEBI:136798"/>
        <dbReference type="ChEBI" id="CHEBI:456215"/>
        <dbReference type="EC" id="2.8.1.4"/>
    </reaction>
</comment>
<comment type="catalytic activity">
    <reaction evidence="1">
        <text>[ThiS sulfur-carrier protein]-C-terminal Gly-Gly-AMP + S-sulfanyl-L-cysteinyl-[cysteine desulfurase] + AH2 = [ThiS sulfur-carrier protein]-C-terminal-Gly-aminoethanethioate + L-cysteinyl-[cysteine desulfurase] + A + AMP + 2 H(+)</text>
        <dbReference type="Rhea" id="RHEA:43340"/>
        <dbReference type="Rhea" id="RHEA-COMP:12157"/>
        <dbReference type="Rhea" id="RHEA-COMP:12158"/>
        <dbReference type="Rhea" id="RHEA-COMP:12910"/>
        <dbReference type="Rhea" id="RHEA-COMP:19908"/>
        <dbReference type="ChEBI" id="CHEBI:13193"/>
        <dbReference type="ChEBI" id="CHEBI:15378"/>
        <dbReference type="ChEBI" id="CHEBI:17499"/>
        <dbReference type="ChEBI" id="CHEBI:29950"/>
        <dbReference type="ChEBI" id="CHEBI:61963"/>
        <dbReference type="ChEBI" id="CHEBI:90618"/>
        <dbReference type="ChEBI" id="CHEBI:232372"/>
        <dbReference type="ChEBI" id="CHEBI:456215"/>
    </reaction>
</comment>
<comment type="pathway">
    <text evidence="1">Cofactor biosynthesis; thiamine diphosphate biosynthesis.</text>
</comment>
<comment type="subcellular location">
    <subcellularLocation>
        <location evidence="1">Cytoplasm</location>
    </subcellularLocation>
</comment>
<comment type="similarity">
    <text evidence="1">Belongs to the ThiI family.</text>
</comment>
<gene>
    <name evidence="1" type="primary">thiI</name>
    <name type="ordered locus">Aflv_0472</name>
</gene>
<organism>
    <name type="scientific">Anoxybacillus flavithermus (strain DSM 21510 / WK1)</name>
    <dbReference type="NCBI Taxonomy" id="491915"/>
    <lineage>
        <taxon>Bacteria</taxon>
        <taxon>Bacillati</taxon>
        <taxon>Bacillota</taxon>
        <taxon>Bacilli</taxon>
        <taxon>Bacillales</taxon>
        <taxon>Anoxybacillaceae</taxon>
        <taxon>Anoxybacillus</taxon>
    </lineage>
</organism>
<protein>
    <recommendedName>
        <fullName evidence="1">Probable tRNA sulfurtransferase</fullName>
        <ecNumber evidence="1">2.8.1.4</ecNumber>
    </recommendedName>
    <alternativeName>
        <fullName evidence="1">Sulfur carrier protein ThiS sulfurtransferase</fullName>
    </alternativeName>
    <alternativeName>
        <fullName evidence="1">Thiamine biosynthesis protein ThiI</fullName>
    </alternativeName>
    <alternativeName>
        <fullName evidence="1">tRNA 4-thiouridine synthase</fullName>
    </alternativeName>
</protein>
<keyword id="KW-0067">ATP-binding</keyword>
<keyword id="KW-0963">Cytoplasm</keyword>
<keyword id="KW-0547">Nucleotide-binding</keyword>
<keyword id="KW-0694">RNA-binding</keyword>
<keyword id="KW-0784">Thiamine biosynthesis</keyword>
<keyword id="KW-0808">Transferase</keyword>
<keyword id="KW-0820">tRNA-binding</keyword>
<reference key="1">
    <citation type="journal article" date="2008" name="Genome Biol.">
        <title>Encapsulated in silica: genome, proteome and physiology of the thermophilic bacterium Anoxybacillus flavithermus WK1.</title>
        <authorList>
            <person name="Saw J.H."/>
            <person name="Mountain B.W."/>
            <person name="Feng L."/>
            <person name="Omelchenko M.V."/>
            <person name="Hou S."/>
            <person name="Saito J.A."/>
            <person name="Stott M.B."/>
            <person name="Li D."/>
            <person name="Zhao G."/>
            <person name="Wu J."/>
            <person name="Galperin M.Y."/>
            <person name="Koonin E.V."/>
            <person name="Makarova K.S."/>
            <person name="Wolf Y.I."/>
            <person name="Rigden D.J."/>
            <person name="Dunfield P.F."/>
            <person name="Wang L."/>
            <person name="Alam M."/>
        </authorList>
    </citation>
    <scope>NUCLEOTIDE SEQUENCE [LARGE SCALE GENOMIC DNA]</scope>
    <source>
        <strain>DSM 21510 / WK1</strain>
    </source>
</reference>